<sequence length="1883" mass="205451">MDGQEHAEVPNSMVEDDQSVVAAEAIAELANSTGEPNPEEGEEQSVEDELIAKAQKLMEDITSVANNPNPNILHALSQLLESQESLFLEENGHFSNARGSHNSGKLCILIRENDEFFELISSTFLSENSYSTAVKAASARLLMNCSLTWMYPHVFDDAVTENFKNWVMEEAVKFPGEDSAKKEASDFEMLKTYSTGLLALSLASRGQIVEDVLTSGLSAKLMHYLRVRVLKEPSTSRIHTTETKHVSLKTKEEGRSRVRKIVDTVEGDHVLETDSGREMGQTDVQPDGEFEIDGRDVFNVSGVVDCKIKPGDDNSVRDDPSRHRLNRSKSRGRGRVHEGAPDTEVLLASPRLGRLLVRDRDLSKISDGRNAEDVTVCLGKMKSGIMEIEREDNDECFQGCIIGTKNITDLVKRAVGAAETEARAAHAPDDAAKAAGDAAAELVKTAALEEFKSSGSEEAAVSAATRAAITVIDAAEVSRNPTCVTSDQTTDVSEVSLPDIESLAQLQEKYCIQCLEILGEYVEVLGPVLHEKGVDVCIVLLERTSQLDDRSTVSPLLPDVMKLICALAAHRKFAAMFVERRGILKLLAVPRVSETFYGLSSCLYTIGSLQGIMERVCALPLVVIHQVVKLAIELLDCSQDQARKNSALFFAAAFVFRAILDAFDAQDSLQKLLAILKDAASVRTGANTDRSAPEVMTSSEKQMAFHTCFALRQYFRAHLLLLVDSIRPSRISRGGVPSSMKPNIRAAYKPLDISNEAVDAIFLQLQKDRRLGPTFVKAQWPAVNNFLASSGHVTMLELCQTPPVDRYLHDLLQYAFGVLHIVTSIPDGRKAIAHATLSNNRAGIAVILDAANISNSIVDPEIIQPALNVLINLVCPPPSLSNKPPLAQNHQPVPGQATTRPSTDVAVGTQSTGNAPQTPVAPASSGLVGDRRIFLGAGTGSAGLAAKLEQVYRQAREAVRGNDGIKILLKLLQPRIYVNPPATPDCLRALACRVLLGLARDDTIAQILTKLEVGKSLSELIRDSGGQSSGTDQGRWQAELAQVALELIGIVTNSGHATTLTASDAATPTLRRIERAAIAAATPITYDSKELLLLIHEHLQASGLGDTASALLKEAQLTPLPSSASPSSIAYSTTQEMSTPLAQEQWPSGRANSGFFTSKPKVCAHDEDPNSRSNAALSAKKKHLASSTLEMPTPVAQQQWPSGRANCGFCPSIPKINARDEDPSSRGNAAPSAKKKQLTFSPSFSSQSRKQSFSHDALPQSTQRINCCSNSDPALADTSETAAELVLKNDLDADAQFKTPISFPRKRKLSELRDSSVPGKRIDLGERRNSTFADGSGLQTPASALDANQSGSSRLGQMTPASQLRLPSDPQPSNPERLSLDSLVVQYLKHQHRQCLAPITTLPPVSLLHPHVCPEPKRLLEAPLNMTGRLGTRELQSFYSGVHGNRRDRQFVFSRFKSWRSFRDETALFTCIALLGGTNHIAVGSHAGEIKIFEASSGSMLESVSGHQAPVTLVQPYVSRDTQLLLSSSSSDVQLWDASSITGGPRHSFDGCKAAKFSNSGLQFAALSCEASRKDVLLYDVQTCSPCQKLTDTVTSSRSNPYSLVHFSPCDTLILWNGVLWDRRIPEKVRRFDQFTDYGGGGFHPSRNEVIINSEIWDMRTFKLLRSVPSLDQTAITFNSRGDVIYAMLRRNIEDVMSAVHTRRVKHPLFAAFRTLDAINYSDIATIPVDRCLLDFATEPTDSFLGLITMEDQEDMFSSARMYEIGRRRPTDDDSDPDDDDETEDEDEDDEEEDDLDRILGLAGDNSDSGDDDLSSEDNEDSVSDFDEEADILIDGDFMEELIEGENEDDGNGEDEDDDDDGEMQDFMSSGEEDDYRDNIRSS</sequence>
<reference key="1">
    <citation type="journal article" date="1999" name="Nature">
        <title>Sequence and analysis of chromosome 4 of the plant Arabidopsis thaliana.</title>
        <authorList>
            <person name="Mayer K.F.X."/>
            <person name="Schueller C."/>
            <person name="Wambutt R."/>
            <person name="Murphy G."/>
            <person name="Volckaert G."/>
            <person name="Pohl T."/>
            <person name="Duesterhoeft A."/>
            <person name="Stiekema W."/>
            <person name="Entian K.-D."/>
            <person name="Terryn N."/>
            <person name="Harris B."/>
            <person name="Ansorge W."/>
            <person name="Brandt P."/>
            <person name="Grivell L.A."/>
            <person name="Rieger M."/>
            <person name="Weichselgartner M."/>
            <person name="de Simone V."/>
            <person name="Obermaier B."/>
            <person name="Mache R."/>
            <person name="Mueller M."/>
            <person name="Kreis M."/>
            <person name="Delseny M."/>
            <person name="Puigdomenech P."/>
            <person name="Watson M."/>
            <person name="Schmidtheini T."/>
            <person name="Reichert B."/>
            <person name="Portetelle D."/>
            <person name="Perez-Alonso M."/>
            <person name="Boutry M."/>
            <person name="Bancroft I."/>
            <person name="Vos P."/>
            <person name="Hoheisel J."/>
            <person name="Zimmermann W."/>
            <person name="Wedler H."/>
            <person name="Ridley P."/>
            <person name="Langham S.-A."/>
            <person name="McCullagh B."/>
            <person name="Bilham L."/>
            <person name="Robben J."/>
            <person name="van der Schueren J."/>
            <person name="Grymonprez B."/>
            <person name="Chuang Y.-J."/>
            <person name="Vandenbussche F."/>
            <person name="Braeken M."/>
            <person name="Weltjens I."/>
            <person name="Voet M."/>
            <person name="Bastiaens I."/>
            <person name="Aert R."/>
            <person name="Defoor E."/>
            <person name="Weitzenegger T."/>
            <person name="Bothe G."/>
            <person name="Ramsperger U."/>
            <person name="Hilbert H."/>
            <person name="Braun M."/>
            <person name="Holzer E."/>
            <person name="Brandt A."/>
            <person name="Peters S."/>
            <person name="van Staveren M."/>
            <person name="Dirkse W."/>
            <person name="Mooijman P."/>
            <person name="Klein Lankhorst R."/>
            <person name="Rose M."/>
            <person name="Hauf J."/>
            <person name="Koetter P."/>
            <person name="Berneiser S."/>
            <person name="Hempel S."/>
            <person name="Feldpausch M."/>
            <person name="Lamberth S."/>
            <person name="Van den Daele H."/>
            <person name="De Keyser A."/>
            <person name="Buysshaert C."/>
            <person name="Gielen J."/>
            <person name="Villarroel R."/>
            <person name="De Clercq R."/>
            <person name="van Montagu M."/>
            <person name="Rogers J."/>
            <person name="Cronin A."/>
            <person name="Quail M.A."/>
            <person name="Bray-Allen S."/>
            <person name="Clark L."/>
            <person name="Doggett J."/>
            <person name="Hall S."/>
            <person name="Kay M."/>
            <person name="Lennard N."/>
            <person name="McLay K."/>
            <person name="Mayes R."/>
            <person name="Pettett A."/>
            <person name="Rajandream M.A."/>
            <person name="Lyne M."/>
            <person name="Benes V."/>
            <person name="Rechmann S."/>
            <person name="Borkova D."/>
            <person name="Bloecker H."/>
            <person name="Scharfe M."/>
            <person name="Grimm M."/>
            <person name="Loehnert T.-H."/>
            <person name="Dose S."/>
            <person name="de Haan M."/>
            <person name="Maarse A.C."/>
            <person name="Schaefer M."/>
            <person name="Mueller-Auer S."/>
            <person name="Gabel C."/>
            <person name="Fuchs M."/>
            <person name="Fartmann B."/>
            <person name="Granderath K."/>
            <person name="Dauner D."/>
            <person name="Herzl A."/>
            <person name="Neumann S."/>
            <person name="Argiriou A."/>
            <person name="Vitale D."/>
            <person name="Liguori R."/>
            <person name="Piravandi E."/>
            <person name="Massenet O."/>
            <person name="Quigley F."/>
            <person name="Clabauld G."/>
            <person name="Muendlein A."/>
            <person name="Felber R."/>
            <person name="Schnabl S."/>
            <person name="Hiller R."/>
            <person name="Schmidt W."/>
            <person name="Lecharny A."/>
            <person name="Aubourg S."/>
            <person name="Chefdor F."/>
            <person name="Cooke R."/>
            <person name="Berger C."/>
            <person name="Monfort A."/>
            <person name="Casacuberta E."/>
            <person name="Gibbons T."/>
            <person name="Weber N."/>
            <person name="Vandenbol M."/>
            <person name="Bargues M."/>
            <person name="Terol J."/>
            <person name="Torres A."/>
            <person name="Perez-Perez A."/>
            <person name="Purnelle B."/>
            <person name="Bent E."/>
            <person name="Johnson S."/>
            <person name="Tacon D."/>
            <person name="Jesse T."/>
            <person name="Heijnen L."/>
            <person name="Schwarz S."/>
            <person name="Scholler P."/>
            <person name="Heber S."/>
            <person name="Francs P."/>
            <person name="Bielke C."/>
            <person name="Frishman D."/>
            <person name="Haase D."/>
            <person name="Lemcke K."/>
            <person name="Mewes H.-W."/>
            <person name="Stocker S."/>
            <person name="Zaccaria P."/>
            <person name="Bevan M."/>
            <person name="Wilson R.K."/>
            <person name="de la Bastide M."/>
            <person name="Habermann K."/>
            <person name="Parnell L."/>
            <person name="Dedhia N."/>
            <person name="Gnoj L."/>
            <person name="Schutz K."/>
            <person name="Huang E."/>
            <person name="Spiegel L."/>
            <person name="Sekhon M."/>
            <person name="Murray J."/>
            <person name="Sheet P."/>
            <person name="Cordes M."/>
            <person name="Abu-Threideh J."/>
            <person name="Stoneking T."/>
            <person name="Kalicki J."/>
            <person name="Graves T."/>
            <person name="Harmon G."/>
            <person name="Edwards J."/>
            <person name="Latreille P."/>
            <person name="Courtney L."/>
            <person name="Cloud J."/>
            <person name="Abbott A."/>
            <person name="Scott K."/>
            <person name="Johnson D."/>
            <person name="Minx P."/>
            <person name="Bentley D."/>
            <person name="Fulton B."/>
            <person name="Miller N."/>
            <person name="Greco T."/>
            <person name="Kemp K."/>
            <person name="Kramer J."/>
            <person name="Fulton L."/>
            <person name="Mardis E."/>
            <person name="Dante M."/>
            <person name="Pepin K."/>
            <person name="Hillier L.W."/>
            <person name="Nelson J."/>
            <person name="Spieth J."/>
            <person name="Ryan E."/>
            <person name="Andrews S."/>
            <person name="Geisel C."/>
            <person name="Layman D."/>
            <person name="Du H."/>
            <person name="Ali J."/>
            <person name="Berghoff A."/>
            <person name="Jones K."/>
            <person name="Drone K."/>
            <person name="Cotton M."/>
            <person name="Joshu C."/>
            <person name="Antonoiu B."/>
            <person name="Zidanic M."/>
            <person name="Strong C."/>
            <person name="Sun H."/>
            <person name="Lamar B."/>
            <person name="Yordan C."/>
            <person name="Ma P."/>
            <person name="Zhong J."/>
            <person name="Preston R."/>
            <person name="Vil D."/>
            <person name="Shekher M."/>
            <person name="Matero A."/>
            <person name="Shah R."/>
            <person name="Swaby I.K."/>
            <person name="O'Shaughnessy A."/>
            <person name="Rodriguez M."/>
            <person name="Hoffman J."/>
            <person name="Till S."/>
            <person name="Granat S."/>
            <person name="Shohdy N."/>
            <person name="Hasegawa A."/>
            <person name="Hameed A."/>
            <person name="Lodhi M."/>
            <person name="Johnson A."/>
            <person name="Chen E."/>
            <person name="Marra M.A."/>
            <person name="Martienssen R."/>
            <person name="McCombie W.R."/>
        </authorList>
    </citation>
    <scope>NUCLEOTIDE SEQUENCE [LARGE SCALE GENOMIC DNA]</scope>
    <source>
        <strain>cv. Columbia</strain>
    </source>
</reference>
<reference key="2">
    <citation type="journal article" date="2017" name="Plant J.">
        <title>Araport11: a complete reannotation of the Arabidopsis thaliana reference genome.</title>
        <authorList>
            <person name="Cheng C.Y."/>
            <person name="Krishnakumar V."/>
            <person name="Chan A.P."/>
            <person name="Thibaud-Nissen F."/>
            <person name="Schobel S."/>
            <person name="Town C.D."/>
        </authorList>
    </citation>
    <scope>GENOME REANNOTATION</scope>
    <source>
        <strain>cv. Columbia</strain>
    </source>
</reference>
<reference key="3">
    <citation type="journal article" date="2002" name="Science">
        <title>Functional annotation of a full-length Arabidopsis cDNA collection.</title>
        <authorList>
            <person name="Seki M."/>
            <person name="Narusaka M."/>
            <person name="Kamiya A."/>
            <person name="Ishida J."/>
            <person name="Satou M."/>
            <person name="Sakurai T."/>
            <person name="Nakajima M."/>
            <person name="Enju A."/>
            <person name="Akiyama K."/>
            <person name="Oono Y."/>
            <person name="Muramatsu M."/>
            <person name="Hayashizaki Y."/>
            <person name="Kawai J."/>
            <person name="Carninci P."/>
            <person name="Itoh M."/>
            <person name="Ishii Y."/>
            <person name="Arakawa T."/>
            <person name="Shibata K."/>
            <person name="Shinagawa A."/>
            <person name="Shinozaki K."/>
        </authorList>
    </citation>
    <scope>NUCLEOTIDE SEQUENCE [LARGE SCALE MRNA] OF 1521-1883</scope>
    <source>
        <strain>cv. Columbia</strain>
    </source>
</reference>
<reference key="4">
    <citation type="journal article" date="2008" name="Plant Cell">
        <title>Arabidopsis DDB1-CUL4 ASSOCIATED FACTOR1 forms a nuclear E3 ubiquitin ligase with DDB1 and CUL4 that is involved in multiple plant developmental processes.</title>
        <authorList>
            <person name="Zhang Y."/>
            <person name="Feng S."/>
            <person name="Chen F."/>
            <person name="Chen H."/>
            <person name="Wang J."/>
            <person name="McCall C."/>
            <person name="Xiong Y."/>
            <person name="Deng X.W."/>
        </authorList>
    </citation>
    <scope>DISRUPTION PHENOTYPE</scope>
    <scope>FUNCTION</scope>
    <scope>SUBCELLULAR LOCATION</scope>
    <scope>COMPONENT OF CUL4-RBX1-DDB1-DCAF1 COMPLEX</scope>
    <scope>INTERACTION WITH DDB1A</scope>
    <scope>MUTAGENESIS OF ASP-1622; ARG-1624; ASP-1658 AND ARG-1660</scope>
</reference>
<reference key="5">
    <citation type="journal article" date="2009" name="J. Proteomics">
        <title>Phosphoproteomic analysis of nuclei-enriched fractions from Arabidopsis thaliana.</title>
        <authorList>
            <person name="Jones A.M.E."/>
            <person name="MacLean D."/>
            <person name="Studholme D.J."/>
            <person name="Serna-Sanz A."/>
            <person name="Andreasson E."/>
            <person name="Rathjen J.P."/>
            <person name="Peck S.C."/>
        </authorList>
    </citation>
    <scope>PHOSPHORYLATION [LARGE SCALE ANALYSIS] AT SER-349</scope>
    <scope>IDENTIFICATION BY MASS SPECTROMETRY [LARGE SCALE ANALYSIS]</scope>
    <source>
        <strain>cv. Columbia</strain>
    </source>
</reference>
<protein>
    <recommendedName>
        <fullName>DDB1- and CUL4-associated factor homolog 1</fullName>
    </recommendedName>
    <alternativeName>
        <fullName>Protein DDB1-CUL4 ASSOCIATED FACTOR 1</fullName>
        <shortName>Protein DCAF1</shortName>
    </alternativeName>
</protein>
<feature type="chain" id="PRO_0000391641" description="DDB1- and CUL4-associated factor homolog 1">
    <location>
        <begin position="1"/>
        <end position="1883"/>
    </location>
</feature>
<feature type="domain" description="LisH" evidence="1">
    <location>
        <begin position="1087"/>
        <end position="1119"/>
    </location>
</feature>
<feature type="repeat" description="WD 1">
    <location>
        <begin position="1464"/>
        <end position="1503"/>
    </location>
</feature>
<feature type="repeat" description="WD 2">
    <location>
        <begin position="1506"/>
        <end position="1546"/>
    </location>
</feature>
<feature type="repeat" description="WD 3">
    <location>
        <begin position="1548"/>
        <end position="1586"/>
    </location>
</feature>
<feature type="repeat" description="WD 4">
    <location>
        <begin position="1587"/>
        <end position="1626"/>
    </location>
</feature>
<feature type="repeat" description="WD 5">
    <location>
        <begin position="1633"/>
        <end position="1671"/>
    </location>
</feature>
<feature type="region of interest" description="Disordered" evidence="2">
    <location>
        <begin position="1"/>
        <end position="47"/>
    </location>
</feature>
<feature type="region of interest" description="Disordered" evidence="2">
    <location>
        <begin position="309"/>
        <end position="340"/>
    </location>
</feature>
<feature type="region of interest" description="Disordered" evidence="2">
    <location>
        <begin position="882"/>
        <end position="924"/>
    </location>
</feature>
<feature type="region of interest" description="Disordered" evidence="2">
    <location>
        <begin position="1157"/>
        <end position="1202"/>
    </location>
</feature>
<feature type="region of interest" description="Disordered" evidence="2">
    <location>
        <begin position="1214"/>
        <end position="1260"/>
    </location>
</feature>
<feature type="region of interest" description="Disordered" evidence="2">
    <location>
        <begin position="1310"/>
        <end position="1377"/>
    </location>
</feature>
<feature type="region of interest" description="Disordered" evidence="2">
    <location>
        <begin position="1763"/>
        <end position="1883"/>
    </location>
</feature>
<feature type="short sequence motif" description="DWD box 1">
    <location>
        <begin position="1619"/>
        <end position="1626"/>
    </location>
</feature>
<feature type="short sequence motif" description="DWD box 2">
    <location>
        <begin position="1655"/>
        <end position="1662"/>
    </location>
</feature>
<feature type="compositionally biased region" description="Acidic residues" evidence="2">
    <location>
        <begin position="37"/>
        <end position="47"/>
    </location>
</feature>
<feature type="compositionally biased region" description="Basic and acidic residues" evidence="2">
    <location>
        <begin position="309"/>
        <end position="322"/>
    </location>
</feature>
<feature type="compositionally biased region" description="Basic residues" evidence="2">
    <location>
        <begin position="323"/>
        <end position="334"/>
    </location>
</feature>
<feature type="compositionally biased region" description="Polar residues" evidence="2">
    <location>
        <begin position="888"/>
        <end position="917"/>
    </location>
</feature>
<feature type="compositionally biased region" description="Low complexity" evidence="2">
    <location>
        <begin position="1238"/>
        <end position="1251"/>
    </location>
</feature>
<feature type="compositionally biased region" description="Basic and acidic residues" evidence="2">
    <location>
        <begin position="1310"/>
        <end position="1329"/>
    </location>
</feature>
<feature type="compositionally biased region" description="Polar residues" evidence="2">
    <location>
        <begin position="1330"/>
        <end position="1362"/>
    </location>
</feature>
<feature type="compositionally biased region" description="Acidic residues" evidence="2">
    <location>
        <begin position="1773"/>
        <end position="1796"/>
    </location>
</feature>
<feature type="compositionally biased region" description="Acidic residues" evidence="2">
    <location>
        <begin position="1808"/>
        <end position="1864"/>
    </location>
</feature>
<feature type="modified residue" description="Phosphoserine" evidence="5">
    <location>
        <position position="349"/>
    </location>
</feature>
<feature type="mutagenesis site" description="Abolishes the DDB1A interaction; when associated with A-1624." evidence="3">
    <original>D</original>
    <variation>A</variation>
    <location>
        <position position="1622"/>
    </location>
</feature>
<feature type="mutagenesis site" description="Abolishes the DDB1A interaction. when associated with A-1622." evidence="3">
    <original>R</original>
    <variation>A</variation>
    <location>
        <position position="1624"/>
    </location>
</feature>
<feature type="mutagenesis site" description="Abolishes the DDB1A interaction. when associated with Ala-1660. when associated with Ala-1624." evidence="3">
    <original>D</original>
    <variation>A</variation>
    <location>
        <position position="1658"/>
    </location>
</feature>
<feature type="mutagenesis site" description="Abolishes the DDB1A interaction. when associated with A-1658." evidence="3">
    <original>R</original>
    <variation>A</variation>
    <location>
        <position position="1660"/>
    </location>
</feature>
<proteinExistence type="evidence at protein level"/>
<comment type="function">
    <text evidence="3">Component of the CUL4-RBX1-DDB1-DCAF1 E3 ubiquitin-protein ligase complex, DCAF1 may function as the substrate recognition module within this complex. Appears to be required for plant embryogenesis and to affect several other developmental processes including leaf, shoot, and flower development.</text>
</comment>
<comment type="pathway">
    <text>Protein modification; protein ubiquitination.</text>
</comment>
<comment type="subunit">
    <text evidence="3">Component of the CUL4-RBX1-DDB1-DCAF1 E3 ubiquitin-protein ligase complex. Interacts with DDB1A through its DWD motifs.</text>
</comment>
<comment type="interaction">
    <interactant intactId="EBI-2429941">
        <id>Q9M086</id>
    </interactant>
    <interactant intactId="EBI-541750">
        <id>Q8LGH4</id>
        <label>CUL4</label>
    </interactant>
    <organismsDiffer>false</organismsDiffer>
    <experiments>2</experiments>
</comment>
<comment type="interaction">
    <interactant intactId="EBI-2429941">
        <id>Q9M086</id>
    </interactant>
    <interactant intactId="EBI-1632780">
        <id>Q9M0V3</id>
        <label>DDB1A</label>
    </interactant>
    <organismsDiffer>false</organismsDiffer>
    <experiments>6</experiments>
</comment>
<comment type="subcellular location">
    <subcellularLocation>
        <location evidence="3">Nucleus</location>
    </subcellularLocation>
</comment>
<comment type="tissue specificity">
    <text>Ubiquitous but predominantly expressed in the inflorescence and roots.</text>
</comment>
<comment type="domain">
    <text>The DWD boxes are required for interaction with DDB1A.</text>
</comment>
<comment type="disruption phenotype">
    <text evidence="3">Embryonic development is arrested at the globular stage.</text>
</comment>
<comment type="similarity">
    <text evidence="4">Belongs to the VPRBP/DCAF1 family.</text>
</comment>
<comment type="sequence caution" evidence="4">
    <conflict type="erroneous initiation">
        <sequence resource="EMBL-CDS" id="BAC43043"/>
    </conflict>
</comment>
<comment type="sequence caution" evidence="4">
    <conflict type="erroneous gene model prediction">
        <sequence resource="EMBL-CDS" id="CAB79834"/>
    </conflict>
</comment>
<accession>Q9M086</accession>
<accession>Q8GX50</accession>
<organism>
    <name type="scientific">Arabidopsis thaliana</name>
    <name type="common">Mouse-ear cress</name>
    <dbReference type="NCBI Taxonomy" id="3702"/>
    <lineage>
        <taxon>Eukaryota</taxon>
        <taxon>Viridiplantae</taxon>
        <taxon>Streptophyta</taxon>
        <taxon>Embryophyta</taxon>
        <taxon>Tracheophyta</taxon>
        <taxon>Spermatophyta</taxon>
        <taxon>Magnoliopsida</taxon>
        <taxon>eudicotyledons</taxon>
        <taxon>Gunneridae</taxon>
        <taxon>Pentapetalae</taxon>
        <taxon>rosids</taxon>
        <taxon>malvids</taxon>
        <taxon>Brassicales</taxon>
        <taxon>Brassicaceae</taxon>
        <taxon>Camelineae</taxon>
        <taxon>Arabidopsis</taxon>
    </lineage>
</organism>
<gene>
    <name type="primary">DCAF1</name>
    <name type="ordered locus">At4g31160</name>
    <name type="ORF">F6E21_80</name>
</gene>
<evidence type="ECO:0000255" key="1">
    <source>
        <dbReference type="PROSITE-ProRule" id="PRU00126"/>
    </source>
</evidence>
<evidence type="ECO:0000256" key="2">
    <source>
        <dbReference type="SAM" id="MobiDB-lite"/>
    </source>
</evidence>
<evidence type="ECO:0000269" key="3">
    <source>
    </source>
</evidence>
<evidence type="ECO:0000305" key="4"/>
<evidence type="ECO:0007744" key="5">
    <source>
    </source>
</evidence>
<name>DCAF1_ARATH</name>
<dbReference type="EMBL" id="AL049914">
    <property type="status" value="NOT_ANNOTATED_CDS"/>
    <property type="molecule type" value="Genomic_DNA"/>
</dbReference>
<dbReference type="EMBL" id="AL161578">
    <property type="protein sequence ID" value="CAB79834.1"/>
    <property type="status" value="ALT_SEQ"/>
    <property type="molecule type" value="Genomic_DNA"/>
</dbReference>
<dbReference type="EMBL" id="CP002687">
    <property type="protein sequence ID" value="AEE85867.1"/>
    <property type="molecule type" value="Genomic_DNA"/>
</dbReference>
<dbReference type="EMBL" id="AK118434">
    <property type="protein sequence ID" value="BAC43043.1"/>
    <property type="status" value="ALT_INIT"/>
    <property type="molecule type" value="mRNA"/>
</dbReference>
<dbReference type="PIR" id="T10670">
    <property type="entry name" value="T10670"/>
</dbReference>
<dbReference type="RefSeq" id="NP_194845.4">
    <property type="nucleotide sequence ID" value="NM_119266.7"/>
</dbReference>
<dbReference type="SMR" id="Q9M086"/>
<dbReference type="BioGRID" id="14531">
    <property type="interactions" value="6"/>
</dbReference>
<dbReference type="FunCoup" id="Q9M086">
    <property type="interactions" value="3436"/>
</dbReference>
<dbReference type="IntAct" id="Q9M086">
    <property type="interactions" value="2"/>
</dbReference>
<dbReference type="STRING" id="3702.Q9M086"/>
<dbReference type="GlyGen" id="Q9M086">
    <property type="glycosylation" value="1 site"/>
</dbReference>
<dbReference type="iPTMnet" id="Q9M086"/>
<dbReference type="PaxDb" id="3702-AT4G31160.1"/>
<dbReference type="ProteomicsDB" id="222758"/>
<dbReference type="EnsemblPlants" id="AT4G31160.1">
    <property type="protein sequence ID" value="AT4G31160.1"/>
    <property type="gene ID" value="AT4G31160"/>
</dbReference>
<dbReference type="GeneID" id="829244"/>
<dbReference type="Gramene" id="AT4G31160.1">
    <property type="protein sequence ID" value="AT4G31160.1"/>
    <property type="gene ID" value="AT4G31160"/>
</dbReference>
<dbReference type="KEGG" id="ath:AT4G31160"/>
<dbReference type="Araport" id="AT4G31160"/>
<dbReference type="TAIR" id="AT4G31160">
    <property type="gene designation" value="DCAF1"/>
</dbReference>
<dbReference type="eggNOG" id="KOG1832">
    <property type="taxonomic scope" value="Eukaryota"/>
</dbReference>
<dbReference type="HOGENOM" id="CLU_237244_0_0_1"/>
<dbReference type="InParanoid" id="Q9M086"/>
<dbReference type="OMA" id="ECSQDQA"/>
<dbReference type="PhylomeDB" id="Q9M086"/>
<dbReference type="UniPathway" id="UPA00143"/>
<dbReference type="PRO" id="PR:Q9M086"/>
<dbReference type="Proteomes" id="UP000006548">
    <property type="component" value="Chromosome 4"/>
</dbReference>
<dbReference type="ExpressionAtlas" id="Q9M086">
    <property type="expression patterns" value="baseline and differential"/>
</dbReference>
<dbReference type="GO" id="GO:0080008">
    <property type="term" value="C:Cul4-RING E3 ubiquitin ligase complex"/>
    <property type="evidence" value="ECO:0000353"/>
    <property type="project" value="TAIR"/>
</dbReference>
<dbReference type="GO" id="GO:0005634">
    <property type="term" value="C:nucleus"/>
    <property type="evidence" value="ECO:0000314"/>
    <property type="project" value="TAIR"/>
</dbReference>
<dbReference type="GO" id="GO:0009793">
    <property type="term" value="P:embryo development ending in seed dormancy"/>
    <property type="evidence" value="ECO:0000315"/>
    <property type="project" value="TAIR"/>
</dbReference>
<dbReference type="GO" id="GO:0009908">
    <property type="term" value="P:flower development"/>
    <property type="evidence" value="ECO:0000315"/>
    <property type="project" value="TAIR"/>
</dbReference>
<dbReference type="GO" id="GO:0010154">
    <property type="term" value="P:fruit development"/>
    <property type="evidence" value="ECO:0000315"/>
    <property type="project" value="TAIR"/>
</dbReference>
<dbReference type="GO" id="GO:0048366">
    <property type="term" value="P:leaf development"/>
    <property type="evidence" value="ECO:0000315"/>
    <property type="project" value="TAIR"/>
</dbReference>
<dbReference type="GO" id="GO:0048827">
    <property type="term" value="P:phyllome development"/>
    <property type="evidence" value="ECO:0000315"/>
    <property type="project" value="TAIR"/>
</dbReference>
<dbReference type="GO" id="GO:0016567">
    <property type="term" value="P:protein ubiquitination"/>
    <property type="evidence" value="ECO:0007669"/>
    <property type="project" value="UniProtKB-UniPathway"/>
</dbReference>
<dbReference type="GO" id="GO:0048367">
    <property type="term" value="P:shoot system development"/>
    <property type="evidence" value="ECO:0000315"/>
    <property type="project" value="TAIR"/>
</dbReference>
<dbReference type="FunFam" id="2.130.10.10:FF:000366">
    <property type="entry name" value="DDB1-and CUL4-associated factor homolog 1"/>
    <property type="match status" value="1"/>
</dbReference>
<dbReference type="Gene3D" id="2.130.10.10">
    <property type="entry name" value="YVTN repeat-like/Quinoprotein amine dehydrogenase"/>
    <property type="match status" value="1"/>
</dbReference>
<dbReference type="InterPro" id="IPR006594">
    <property type="entry name" value="LisH"/>
</dbReference>
<dbReference type="InterPro" id="IPR033270">
    <property type="entry name" value="VPRBP/DCAF1"/>
</dbReference>
<dbReference type="InterPro" id="IPR015943">
    <property type="entry name" value="WD40/YVTN_repeat-like_dom_sf"/>
</dbReference>
<dbReference type="InterPro" id="IPR036322">
    <property type="entry name" value="WD40_repeat_dom_sf"/>
</dbReference>
<dbReference type="PANTHER" id="PTHR13129:SF4">
    <property type="entry name" value="DDB1- AND CUL4-ASSOCIATED FACTOR 1"/>
    <property type="match status" value="1"/>
</dbReference>
<dbReference type="PANTHER" id="PTHR13129">
    <property type="entry name" value="VPRBP PROTEIN-RELATED"/>
    <property type="match status" value="1"/>
</dbReference>
<dbReference type="Pfam" id="PF08513">
    <property type="entry name" value="LisH"/>
    <property type="match status" value="1"/>
</dbReference>
<dbReference type="SMART" id="SM00667">
    <property type="entry name" value="LisH"/>
    <property type="match status" value="1"/>
</dbReference>
<dbReference type="SUPFAM" id="SSF50978">
    <property type="entry name" value="WD40 repeat-like"/>
    <property type="match status" value="1"/>
</dbReference>
<dbReference type="PROSITE" id="PS50896">
    <property type="entry name" value="LISH"/>
    <property type="match status" value="1"/>
</dbReference>
<dbReference type="PROSITE" id="PS50294">
    <property type="entry name" value="WD_REPEATS_REGION"/>
    <property type="match status" value="1"/>
</dbReference>
<keyword id="KW-0539">Nucleus</keyword>
<keyword id="KW-0597">Phosphoprotein</keyword>
<keyword id="KW-1185">Reference proteome</keyword>
<keyword id="KW-0677">Repeat</keyword>
<keyword id="KW-0833">Ubl conjugation pathway</keyword>
<keyword id="KW-0853">WD repeat</keyword>